<name>NU4C1_TRIV2</name>
<proteinExistence type="inferred from homology"/>
<feature type="chain" id="PRO_0000343230" description="NAD(P)H-quinone oxidoreductase chain 4 1">
    <location>
        <begin position="1"/>
        <end position="525"/>
    </location>
</feature>
<feature type="transmembrane region" description="Helical" evidence="1">
    <location>
        <begin position="6"/>
        <end position="26"/>
    </location>
</feature>
<feature type="transmembrane region" description="Helical" evidence="1">
    <location>
        <begin position="36"/>
        <end position="56"/>
    </location>
</feature>
<feature type="transmembrane region" description="Helical" evidence="1">
    <location>
        <begin position="91"/>
        <end position="111"/>
    </location>
</feature>
<feature type="transmembrane region" description="Helical" evidence="1">
    <location>
        <begin position="115"/>
        <end position="135"/>
    </location>
</feature>
<feature type="transmembrane region" description="Helical" evidence="1">
    <location>
        <begin position="136"/>
        <end position="156"/>
    </location>
</feature>
<feature type="transmembrane region" description="Helical" evidence="1">
    <location>
        <begin position="169"/>
        <end position="189"/>
    </location>
</feature>
<feature type="transmembrane region" description="Helical" evidence="1">
    <location>
        <begin position="212"/>
        <end position="232"/>
    </location>
</feature>
<feature type="transmembrane region" description="Helical" evidence="1">
    <location>
        <begin position="243"/>
        <end position="263"/>
    </location>
</feature>
<feature type="transmembrane region" description="Helical" evidence="1">
    <location>
        <begin position="277"/>
        <end position="297"/>
    </location>
</feature>
<feature type="transmembrane region" description="Helical" evidence="1">
    <location>
        <begin position="314"/>
        <end position="334"/>
    </location>
</feature>
<feature type="transmembrane region" description="Helical" evidence="1">
    <location>
        <begin position="335"/>
        <end position="355"/>
    </location>
</feature>
<feature type="transmembrane region" description="Helical" evidence="1">
    <location>
        <begin position="375"/>
        <end position="397"/>
    </location>
</feature>
<feature type="transmembrane region" description="Helical" evidence="1">
    <location>
        <begin position="417"/>
        <end position="437"/>
    </location>
</feature>
<feature type="transmembrane region" description="Helical" evidence="1">
    <location>
        <begin position="464"/>
        <end position="484"/>
    </location>
</feature>
<protein>
    <recommendedName>
        <fullName evidence="1">NAD(P)H-quinone oxidoreductase chain 4 1</fullName>
        <ecNumber evidence="1">7.1.1.-</ecNumber>
    </recommendedName>
    <alternativeName>
        <fullName evidence="1">NAD(P)H dehydrogenase I, chain 4 1</fullName>
    </alternativeName>
    <alternativeName>
        <fullName evidence="1">NDH-1, chain 4 1</fullName>
    </alternativeName>
</protein>
<keyword id="KW-0472">Membrane</keyword>
<keyword id="KW-0520">NAD</keyword>
<keyword id="KW-0521">NADP</keyword>
<keyword id="KW-0618">Plastoquinone</keyword>
<keyword id="KW-0874">Quinone</keyword>
<keyword id="KW-0793">Thylakoid</keyword>
<keyword id="KW-1278">Translocase</keyword>
<keyword id="KW-0812">Transmembrane</keyword>
<keyword id="KW-1133">Transmembrane helix</keyword>
<comment type="function">
    <text evidence="1">NDH-1 shuttles electrons from NAD(P)H, via FMN and iron-sulfur (Fe-S) centers, to quinones in the respiratory chain. The immediate electron acceptor for the enzyme in this species is believed to be plastoquinone. Couples the redox reaction to proton translocation (for every two electrons transferred, four hydrogen ions are translocated across the cytoplasmic membrane), and thus conserves the redox energy in a proton gradient.</text>
</comment>
<comment type="catalytic activity">
    <reaction evidence="1">
        <text>a plastoquinone + NADH + (n+1) H(+)(in) = a plastoquinol + NAD(+) + n H(+)(out)</text>
        <dbReference type="Rhea" id="RHEA:42608"/>
        <dbReference type="Rhea" id="RHEA-COMP:9561"/>
        <dbReference type="Rhea" id="RHEA-COMP:9562"/>
        <dbReference type="ChEBI" id="CHEBI:15378"/>
        <dbReference type="ChEBI" id="CHEBI:17757"/>
        <dbReference type="ChEBI" id="CHEBI:57540"/>
        <dbReference type="ChEBI" id="CHEBI:57945"/>
        <dbReference type="ChEBI" id="CHEBI:62192"/>
    </reaction>
</comment>
<comment type="catalytic activity">
    <reaction evidence="1">
        <text>a plastoquinone + NADPH + (n+1) H(+)(in) = a plastoquinol + NADP(+) + n H(+)(out)</text>
        <dbReference type="Rhea" id="RHEA:42612"/>
        <dbReference type="Rhea" id="RHEA-COMP:9561"/>
        <dbReference type="Rhea" id="RHEA-COMP:9562"/>
        <dbReference type="ChEBI" id="CHEBI:15378"/>
        <dbReference type="ChEBI" id="CHEBI:17757"/>
        <dbReference type="ChEBI" id="CHEBI:57783"/>
        <dbReference type="ChEBI" id="CHEBI:58349"/>
        <dbReference type="ChEBI" id="CHEBI:62192"/>
    </reaction>
</comment>
<comment type="subcellular location">
    <subcellularLocation>
        <location evidence="1">Cellular thylakoid membrane</location>
        <topology evidence="1">Multi-pass membrane protein</topology>
    </subcellularLocation>
</comment>
<comment type="similarity">
    <text evidence="1">Belongs to the complex I subunit 4 family.</text>
</comment>
<accession>Q3MCB9</accession>
<reference key="1">
    <citation type="journal article" date="2014" name="Stand. Genomic Sci.">
        <title>Complete genome sequence of Anabaena variabilis ATCC 29413.</title>
        <authorList>
            <person name="Thiel T."/>
            <person name="Pratte B.S."/>
            <person name="Zhong J."/>
            <person name="Goodwin L."/>
            <person name="Copeland A."/>
            <person name="Lucas S."/>
            <person name="Han C."/>
            <person name="Pitluck S."/>
            <person name="Land M.L."/>
            <person name="Kyrpides N.C."/>
            <person name="Woyke T."/>
        </authorList>
    </citation>
    <scope>NUCLEOTIDE SEQUENCE [LARGE SCALE GENOMIC DNA]</scope>
    <source>
        <strain>ATCC 29413 / PCC 7937</strain>
    </source>
</reference>
<sequence length="525" mass="57613">MNTANFPWLTTIILLPIAASLLIPIIPDKDGKTIRWYALIVGLIDFALIVYAFYTSYDFANPDLQLVESYPWVPQLDLNWSVGADGLSMPLIILTGFITTLATLAAWPVTLKPRLFYFLLLAMYGGQIAVFAVQDLLLFFLVWELELIPVYLLLAIWGGKKRQYAATKFILYTAGGSLFILLAALTMAFYGDNVTFDMRSLALKDYALNFQLLLYAGFLIAYAIKLPIIPLHTWLPDAHGEATAPAHMLLAGILLKMGGYALIRMNAGILPDAHAYFAPVLVVLGVVNIIYAALTSFAQRNLKRKIAYSSISHMGFVIIGFASFTDLGLSGAVLQMVSHGLIGASLFFLVGATYDRTHTLMLDEMGGVGKRMPKIFAMFTACSMASLALPGMSGFVAELMVFVGFATSDAYSSTFKVIVVFLMAVGVILTPIYLLSMLREIFYGKENEELVSHQQLIDAEPREVFVIACLLVPIIGIGFYPKLLTQMYDATTVQLTARLRDSVPTLAQEKPEAPKVSLSAPVIGN</sequence>
<evidence type="ECO:0000255" key="1">
    <source>
        <dbReference type="HAMAP-Rule" id="MF_00491"/>
    </source>
</evidence>
<organism>
    <name type="scientific">Trichormus variabilis (strain ATCC 29413 / PCC 7937)</name>
    <name type="common">Anabaena variabilis</name>
    <dbReference type="NCBI Taxonomy" id="240292"/>
    <lineage>
        <taxon>Bacteria</taxon>
        <taxon>Bacillati</taxon>
        <taxon>Cyanobacteriota</taxon>
        <taxon>Cyanophyceae</taxon>
        <taxon>Nostocales</taxon>
        <taxon>Nostocaceae</taxon>
        <taxon>Trichormus</taxon>
    </lineage>
</organism>
<dbReference type="EC" id="7.1.1.-" evidence="1"/>
<dbReference type="EMBL" id="CP000117">
    <property type="protein sequence ID" value="ABA21367.1"/>
    <property type="molecule type" value="Genomic_DNA"/>
</dbReference>
<dbReference type="SMR" id="Q3MCB9"/>
<dbReference type="STRING" id="240292.Ava_1745"/>
<dbReference type="KEGG" id="ava:Ava_1745"/>
<dbReference type="eggNOG" id="COG1008">
    <property type="taxonomic scope" value="Bacteria"/>
</dbReference>
<dbReference type="HOGENOM" id="CLU_007100_4_0_3"/>
<dbReference type="Proteomes" id="UP000002533">
    <property type="component" value="Chromosome"/>
</dbReference>
<dbReference type="GO" id="GO:0031676">
    <property type="term" value="C:plasma membrane-derived thylakoid membrane"/>
    <property type="evidence" value="ECO:0007669"/>
    <property type="project" value="UniProtKB-SubCell"/>
</dbReference>
<dbReference type="GO" id="GO:0008137">
    <property type="term" value="F:NADH dehydrogenase (ubiquinone) activity"/>
    <property type="evidence" value="ECO:0007669"/>
    <property type="project" value="InterPro"/>
</dbReference>
<dbReference type="GO" id="GO:0048039">
    <property type="term" value="F:ubiquinone binding"/>
    <property type="evidence" value="ECO:0007669"/>
    <property type="project" value="TreeGrafter"/>
</dbReference>
<dbReference type="GO" id="GO:0042773">
    <property type="term" value="P:ATP synthesis coupled electron transport"/>
    <property type="evidence" value="ECO:0007669"/>
    <property type="project" value="InterPro"/>
</dbReference>
<dbReference type="GO" id="GO:0015990">
    <property type="term" value="P:electron transport coupled proton transport"/>
    <property type="evidence" value="ECO:0007669"/>
    <property type="project" value="TreeGrafter"/>
</dbReference>
<dbReference type="HAMAP" id="MF_00491">
    <property type="entry name" value="NDH1_NuoM"/>
    <property type="match status" value="1"/>
</dbReference>
<dbReference type="InterPro" id="IPR022997">
    <property type="entry name" value="NADH_Q_OxRdtase_chain4"/>
</dbReference>
<dbReference type="InterPro" id="IPR010227">
    <property type="entry name" value="NADH_Q_OxRdtase_chainM/4"/>
</dbReference>
<dbReference type="InterPro" id="IPR003918">
    <property type="entry name" value="NADH_UbQ_OxRdtase"/>
</dbReference>
<dbReference type="InterPro" id="IPR001750">
    <property type="entry name" value="ND/Mrp_TM"/>
</dbReference>
<dbReference type="NCBIfam" id="TIGR01972">
    <property type="entry name" value="NDH_I_M"/>
    <property type="match status" value="1"/>
</dbReference>
<dbReference type="NCBIfam" id="NF002713">
    <property type="entry name" value="PRK02546.1"/>
    <property type="match status" value="1"/>
</dbReference>
<dbReference type="NCBIfam" id="NF009212">
    <property type="entry name" value="PRK12561.1"/>
    <property type="match status" value="1"/>
</dbReference>
<dbReference type="PANTHER" id="PTHR43507:SF21">
    <property type="entry name" value="NAD(P)H-QUINONE OXIDOREDUCTASE CHAIN 4, CHLOROPLASTIC"/>
    <property type="match status" value="1"/>
</dbReference>
<dbReference type="PANTHER" id="PTHR43507">
    <property type="entry name" value="NADH-UBIQUINONE OXIDOREDUCTASE CHAIN 4"/>
    <property type="match status" value="1"/>
</dbReference>
<dbReference type="Pfam" id="PF00361">
    <property type="entry name" value="Proton_antipo_M"/>
    <property type="match status" value="1"/>
</dbReference>
<dbReference type="PRINTS" id="PR01437">
    <property type="entry name" value="NUOXDRDTASE4"/>
</dbReference>
<gene>
    <name evidence="1" type="primary">ndhD1</name>
    <name type="ordered locus">Ava_1745</name>
</gene>